<feature type="chain" id="PRO_1000197481" description="Polyamine aminopropyltransferase">
    <location>
        <begin position="1"/>
        <end position="277"/>
    </location>
</feature>
<feature type="domain" description="PABS" evidence="1">
    <location>
        <begin position="2"/>
        <end position="235"/>
    </location>
</feature>
<feature type="active site" description="Proton acceptor" evidence="1">
    <location>
        <position position="155"/>
    </location>
</feature>
<feature type="binding site" evidence="1">
    <location>
        <position position="31"/>
    </location>
    <ligand>
        <name>S-methyl-5'-thioadenosine</name>
        <dbReference type="ChEBI" id="CHEBI:17509"/>
    </ligand>
</feature>
<feature type="binding site" evidence="1">
    <location>
        <position position="62"/>
    </location>
    <ligand>
        <name>spermidine</name>
        <dbReference type="ChEBI" id="CHEBI:57834"/>
    </ligand>
</feature>
<feature type="binding site" evidence="1">
    <location>
        <position position="86"/>
    </location>
    <ligand>
        <name>spermidine</name>
        <dbReference type="ChEBI" id="CHEBI:57834"/>
    </ligand>
</feature>
<feature type="binding site" evidence="1">
    <location>
        <position position="106"/>
    </location>
    <ligand>
        <name>S-methyl-5'-thioadenosine</name>
        <dbReference type="ChEBI" id="CHEBI:17509"/>
    </ligand>
</feature>
<feature type="binding site" evidence="1">
    <location>
        <begin position="137"/>
        <end position="138"/>
    </location>
    <ligand>
        <name>S-methyl-5'-thioadenosine</name>
        <dbReference type="ChEBI" id="CHEBI:17509"/>
    </ligand>
</feature>
<feature type="binding site" evidence="1">
    <location>
        <begin position="155"/>
        <end position="158"/>
    </location>
    <ligand>
        <name>spermidine</name>
        <dbReference type="ChEBI" id="CHEBI:57834"/>
    </ligand>
</feature>
<feature type="binding site" evidence="1">
    <location>
        <position position="162"/>
    </location>
    <ligand>
        <name>S-methyl-5'-thioadenosine</name>
        <dbReference type="ChEBI" id="CHEBI:17509"/>
    </ligand>
</feature>
<sequence length="277" mass="31574">MELWFTENQDENLRFSLKVKETLVVEKTPYQHLAILDTYQFGRVLTLDGILQTTEKDEFVYHEMIVHVPLFTHKNPKSVLIVGGGDGGSVREVLKHPSVERVVLAEIDEAVVRNSKKYLPTISQALDDPRVEIMIGDGIKYVNEHKNEFDVVIVDSTDPIGPAVGLFTSDFYKAVYECLKEDGIIVAQTESPFIYGKLINKLSKMFKEIYPITKAYIATIPTYPGSLWTFTMGSKKYDPEEVDINSIPRIDTKYYTPEIHKAAFVLPKFVKDIFDEV</sequence>
<dbReference type="EC" id="2.5.1.16" evidence="1"/>
<dbReference type="EMBL" id="CP000924">
    <property type="protein sequence ID" value="ABY94798.1"/>
    <property type="molecule type" value="Genomic_DNA"/>
</dbReference>
<dbReference type="RefSeq" id="WP_003867984.1">
    <property type="nucleotide sequence ID" value="NC_010321.1"/>
</dbReference>
<dbReference type="SMR" id="B0K9I5"/>
<dbReference type="STRING" id="340099.Teth39_1143"/>
<dbReference type="KEGG" id="tpd:Teth39_1143"/>
<dbReference type="eggNOG" id="COG0421">
    <property type="taxonomic scope" value="Bacteria"/>
</dbReference>
<dbReference type="HOGENOM" id="CLU_048199_0_0_9"/>
<dbReference type="UniPathway" id="UPA00248">
    <property type="reaction ID" value="UER00314"/>
</dbReference>
<dbReference type="Proteomes" id="UP000002156">
    <property type="component" value="Chromosome"/>
</dbReference>
<dbReference type="GO" id="GO:0005829">
    <property type="term" value="C:cytosol"/>
    <property type="evidence" value="ECO:0007669"/>
    <property type="project" value="TreeGrafter"/>
</dbReference>
<dbReference type="GO" id="GO:0004766">
    <property type="term" value="F:spermidine synthase activity"/>
    <property type="evidence" value="ECO:0007669"/>
    <property type="project" value="UniProtKB-UniRule"/>
</dbReference>
<dbReference type="GO" id="GO:0008295">
    <property type="term" value="P:spermidine biosynthetic process"/>
    <property type="evidence" value="ECO:0007669"/>
    <property type="project" value="UniProtKB-UniRule"/>
</dbReference>
<dbReference type="CDD" id="cd02440">
    <property type="entry name" value="AdoMet_MTases"/>
    <property type="match status" value="1"/>
</dbReference>
<dbReference type="FunFam" id="3.40.50.150:FF:000056">
    <property type="entry name" value="Polyamine aminopropyltransferase"/>
    <property type="match status" value="1"/>
</dbReference>
<dbReference type="Gene3D" id="2.30.140.10">
    <property type="entry name" value="Spermidine synthase, tetramerisation domain"/>
    <property type="match status" value="1"/>
</dbReference>
<dbReference type="Gene3D" id="3.40.50.150">
    <property type="entry name" value="Vaccinia Virus protein VP39"/>
    <property type="match status" value="1"/>
</dbReference>
<dbReference type="HAMAP" id="MF_00198">
    <property type="entry name" value="Spermidine_synth"/>
    <property type="match status" value="1"/>
</dbReference>
<dbReference type="InterPro" id="IPR030374">
    <property type="entry name" value="PABS"/>
</dbReference>
<dbReference type="InterPro" id="IPR030373">
    <property type="entry name" value="PABS_CS"/>
</dbReference>
<dbReference type="InterPro" id="IPR029063">
    <property type="entry name" value="SAM-dependent_MTases_sf"/>
</dbReference>
<dbReference type="InterPro" id="IPR001045">
    <property type="entry name" value="Spermi_synthase"/>
</dbReference>
<dbReference type="InterPro" id="IPR035246">
    <property type="entry name" value="Spermidine_synt_N"/>
</dbReference>
<dbReference type="InterPro" id="IPR037163">
    <property type="entry name" value="Spermidine_synt_N_sf"/>
</dbReference>
<dbReference type="NCBIfam" id="NF002010">
    <property type="entry name" value="PRK00811.1"/>
    <property type="match status" value="1"/>
</dbReference>
<dbReference type="NCBIfam" id="TIGR00417">
    <property type="entry name" value="speE"/>
    <property type="match status" value="1"/>
</dbReference>
<dbReference type="PANTHER" id="PTHR11558:SF11">
    <property type="entry name" value="SPERMIDINE SYNTHASE"/>
    <property type="match status" value="1"/>
</dbReference>
<dbReference type="PANTHER" id="PTHR11558">
    <property type="entry name" value="SPERMIDINE/SPERMINE SYNTHASE"/>
    <property type="match status" value="1"/>
</dbReference>
<dbReference type="Pfam" id="PF17284">
    <property type="entry name" value="Spermine_synt_N"/>
    <property type="match status" value="1"/>
</dbReference>
<dbReference type="Pfam" id="PF01564">
    <property type="entry name" value="Spermine_synth"/>
    <property type="match status" value="1"/>
</dbReference>
<dbReference type="SUPFAM" id="SSF53335">
    <property type="entry name" value="S-adenosyl-L-methionine-dependent methyltransferases"/>
    <property type="match status" value="1"/>
</dbReference>
<dbReference type="PROSITE" id="PS01330">
    <property type="entry name" value="PABS_1"/>
    <property type="match status" value="1"/>
</dbReference>
<dbReference type="PROSITE" id="PS51006">
    <property type="entry name" value="PABS_2"/>
    <property type="match status" value="1"/>
</dbReference>
<proteinExistence type="inferred from homology"/>
<name>SPEE_THEP3</name>
<keyword id="KW-0963">Cytoplasm</keyword>
<keyword id="KW-0620">Polyamine biosynthesis</keyword>
<keyword id="KW-1185">Reference proteome</keyword>
<keyword id="KW-0745">Spermidine biosynthesis</keyword>
<keyword id="KW-0808">Transferase</keyword>
<reference key="1">
    <citation type="submission" date="2008-01" db="EMBL/GenBank/DDBJ databases">
        <title>Complete sequence of Thermoanaerobacter pseudethanolicus 39E.</title>
        <authorList>
            <person name="Copeland A."/>
            <person name="Lucas S."/>
            <person name="Lapidus A."/>
            <person name="Barry K."/>
            <person name="Glavina del Rio T."/>
            <person name="Dalin E."/>
            <person name="Tice H."/>
            <person name="Pitluck S."/>
            <person name="Bruce D."/>
            <person name="Goodwin L."/>
            <person name="Saunders E."/>
            <person name="Brettin T."/>
            <person name="Detter J.C."/>
            <person name="Han C."/>
            <person name="Schmutz J."/>
            <person name="Larimer F."/>
            <person name="Land M."/>
            <person name="Hauser L."/>
            <person name="Kyrpides N."/>
            <person name="Lykidis A."/>
            <person name="Hemme C."/>
            <person name="Fields M.W."/>
            <person name="He Z."/>
            <person name="Zhou J."/>
            <person name="Richardson P."/>
        </authorList>
    </citation>
    <scope>NUCLEOTIDE SEQUENCE [LARGE SCALE GENOMIC DNA]</scope>
    <source>
        <strain>ATCC 33223 / DSM 2355 / 39E</strain>
    </source>
</reference>
<comment type="function">
    <text evidence="1">Catalyzes the irreversible transfer of a propylamine group from the amino donor S-adenosylmethioninamine (decarboxy-AdoMet) to putrescine (1,4-diaminobutane) to yield spermidine.</text>
</comment>
<comment type="catalytic activity">
    <reaction evidence="1">
        <text>S-adenosyl 3-(methylsulfanyl)propylamine + putrescine = S-methyl-5'-thioadenosine + spermidine + H(+)</text>
        <dbReference type="Rhea" id="RHEA:12721"/>
        <dbReference type="ChEBI" id="CHEBI:15378"/>
        <dbReference type="ChEBI" id="CHEBI:17509"/>
        <dbReference type="ChEBI" id="CHEBI:57443"/>
        <dbReference type="ChEBI" id="CHEBI:57834"/>
        <dbReference type="ChEBI" id="CHEBI:326268"/>
        <dbReference type="EC" id="2.5.1.16"/>
    </reaction>
</comment>
<comment type="pathway">
    <text evidence="1">Amine and polyamine biosynthesis; spermidine biosynthesis; spermidine from putrescine: step 1/1.</text>
</comment>
<comment type="subunit">
    <text evidence="1">Homodimer or homotetramer.</text>
</comment>
<comment type="subcellular location">
    <subcellularLocation>
        <location evidence="1">Cytoplasm</location>
    </subcellularLocation>
</comment>
<comment type="similarity">
    <text evidence="1">Belongs to the spermidine/spermine synthase family.</text>
</comment>
<gene>
    <name evidence="1" type="primary">speE</name>
    <name type="ordered locus">Teth39_1143</name>
</gene>
<protein>
    <recommendedName>
        <fullName evidence="1">Polyamine aminopropyltransferase</fullName>
    </recommendedName>
    <alternativeName>
        <fullName evidence="1">Putrescine aminopropyltransferase</fullName>
        <shortName evidence="1">PAPT</shortName>
    </alternativeName>
    <alternativeName>
        <fullName evidence="1">Spermidine synthase</fullName>
        <shortName evidence="1">SPDS</shortName>
        <shortName evidence="1">SPDSY</shortName>
        <ecNumber evidence="1">2.5.1.16</ecNumber>
    </alternativeName>
</protein>
<evidence type="ECO:0000255" key="1">
    <source>
        <dbReference type="HAMAP-Rule" id="MF_00198"/>
    </source>
</evidence>
<accession>B0K9I5</accession>
<organism>
    <name type="scientific">Thermoanaerobacter pseudethanolicus (strain ATCC 33223 / 39E)</name>
    <name type="common">Clostridium thermohydrosulfuricum</name>
    <dbReference type="NCBI Taxonomy" id="340099"/>
    <lineage>
        <taxon>Bacteria</taxon>
        <taxon>Bacillati</taxon>
        <taxon>Bacillota</taxon>
        <taxon>Clostridia</taxon>
        <taxon>Thermoanaerobacterales</taxon>
        <taxon>Thermoanaerobacteraceae</taxon>
        <taxon>Thermoanaerobacter</taxon>
    </lineage>
</organism>